<gene>
    <name type="ORF">SPAC11D3.15</name>
</gene>
<dbReference type="EMBL" id="CU329670">
    <property type="protein sequence ID" value="CAA92316.1"/>
    <property type="molecule type" value="Genomic_DNA"/>
</dbReference>
<dbReference type="PIR" id="T37524">
    <property type="entry name" value="T37524"/>
</dbReference>
<dbReference type="RefSeq" id="NP_592810.1">
    <property type="nucleotide sequence ID" value="NM_001018210.2"/>
</dbReference>
<dbReference type="SMR" id="Q10094"/>
<dbReference type="BioGRID" id="279421">
    <property type="interactions" value="19"/>
</dbReference>
<dbReference type="FunCoup" id="Q10094">
    <property type="interactions" value="115"/>
</dbReference>
<dbReference type="STRING" id="284812.Q10094"/>
<dbReference type="iPTMnet" id="Q10094"/>
<dbReference type="PaxDb" id="4896-SPAC11D3.15.1"/>
<dbReference type="EnsemblFungi" id="SPAC11D3.15.1">
    <property type="protein sequence ID" value="SPAC11D3.15.1:pep"/>
    <property type="gene ID" value="SPAC11D3.15"/>
</dbReference>
<dbReference type="KEGG" id="spo:2542983"/>
<dbReference type="PomBase" id="SPAC11D3.15"/>
<dbReference type="VEuPathDB" id="FungiDB:SPAC11D3.15"/>
<dbReference type="eggNOG" id="KOG1939">
    <property type="taxonomic scope" value="Eukaryota"/>
</dbReference>
<dbReference type="HOGENOM" id="CLU_002157_0_1_1"/>
<dbReference type="InParanoid" id="Q10094"/>
<dbReference type="OMA" id="TDCNVML"/>
<dbReference type="PhylomeDB" id="Q10094"/>
<dbReference type="Reactome" id="R-SPO-174403">
    <property type="pathway name" value="Glutathione synthesis and recycling"/>
</dbReference>
<dbReference type="PRO" id="PR:Q10094"/>
<dbReference type="Proteomes" id="UP000002485">
    <property type="component" value="Chromosome I"/>
</dbReference>
<dbReference type="GO" id="GO:0005829">
    <property type="term" value="C:cytosol"/>
    <property type="evidence" value="ECO:0007005"/>
    <property type="project" value="PomBase"/>
</dbReference>
<dbReference type="GO" id="GO:0017168">
    <property type="term" value="F:5-oxoprolinase (ATP-hydrolyzing) activity"/>
    <property type="evidence" value="ECO:0000318"/>
    <property type="project" value="GO_Central"/>
</dbReference>
<dbReference type="GO" id="GO:1990748">
    <property type="term" value="P:cellular detoxification"/>
    <property type="evidence" value="ECO:0000303"/>
    <property type="project" value="PomBase"/>
</dbReference>
<dbReference type="GO" id="GO:0006749">
    <property type="term" value="P:glutathione metabolic process"/>
    <property type="evidence" value="ECO:0000318"/>
    <property type="project" value="GO_Central"/>
</dbReference>
<dbReference type="InterPro" id="IPR049517">
    <property type="entry name" value="ACX-like_C"/>
</dbReference>
<dbReference type="InterPro" id="IPR008040">
    <property type="entry name" value="Hydant_A_N"/>
</dbReference>
<dbReference type="InterPro" id="IPR002821">
    <property type="entry name" value="Hydantoinase_A"/>
</dbReference>
<dbReference type="InterPro" id="IPR003692">
    <property type="entry name" value="Hydantoinase_B"/>
</dbReference>
<dbReference type="InterPro" id="IPR045079">
    <property type="entry name" value="Oxoprolinase-like"/>
</dbReference>
<dbReference type="PANTHER" id="PTHR11365:SF2">
    <property type="entry name" value="5-OXOPROLINASE"/>
    <property type="match status" value="1"/>
</dbReference>
<dbReference type="PANTHER" id="PTHR11365">
    <property type="entry name" value="5-OXOPROLINASE RELATED"/>
    <property type="match status" value="1"/>
</dbReference>
<dbReference type="Pfam" id="PF19278">
    <property type="entry name" value="Hydant_A_C"/>
    <property type="match status" value="1"/>
</dbReference>
<dbReference type="Pfam" id="PF05378">
    <property type="entry name" value="Hydant_A_N"/>
    <property type="match status" value="1"/>
</dbReference>
<dbReference type="Pfam" id="PF01968">
    <property type="entry name" value="Hydantoinase_A"/>
    <property type="match status" value="1"/>
</dbReference>
<dbReference type="Pfam" id="PF02538">
    <property type="entry name" value="Hydantoinase_B"/>
    <property type="match status" value="1"/>
</dbReference>
<protein>
    <recommendedName>
        <fullName>Uncharacterized protein C11D3.15</fullName>
    </recommendedName>
</protein>
<comment type="similarity">
    <text evidence="1">Belongs to the oxoprolinase family.</text>
</comment>
<accession>Q10094</accession>
<accession>O59665</accession>
<sequence>MSVKIHIDRGGTFTDAIATFADESRPPIVIKLLSEDPSNYKDASIEAVRRILEIVQGKSIPRTEKLDTSCINHLRCGTTVATNALLERKGERCAFITTKGFKDGLLIGNQSRPNIFELGIRRPEVLYSKVIEVDERVTLEDYVEDPMKVKTTIDGSDPSLVVGRSGEVVRIMKKVDCDALRKDLQALYDEGFTSIAVCLAHSFTFPDHELLVGKIAEEVGFSNISLSTKLMPMIKYVPRATSATADAYLSPVVRRYLAGFQSGFLHGLKTKDNSKGVRCEFMQSDGGLVDVNKFSGLHAILSGPAGGVVGFALTSYDEDVKIPVIGFDMGGTSTDVSRYGGSYEHVFETTTAGVTIQSPQLDINTVAAGGGSRLFWKNGLFVVGPESAGAHPGPVCYRKGGYLTVTDANLLLGRLLPESFPKIFGPNEDESLDVESTRKEFEKLTAEINSGLEKERQMTADEVAFGFIKIANETMARPIRALTEAKGHDISIHRLTSFGGAGGQHCAAIAKSLGITQVLVHKYSSILSAYGMALADVVSEVQEPSSFTLDDSNTESIKKRFDSLKEEAKANLEEQGFTESQISYELFLNCRYQGTDSTLMISKPLESWDFKQSFFDKHKQEFGFIFENKDIIIDDIRIRASGKSFQSKEPSVDAQLKELKFEPVQKSLATCVKDIYFEGGRVPSEVYSLDNLPVGTIVNGPSLIVDKTQTIVVPPKAVARILHTHVVIDISHGNEYTANDSLAKASTIDPIYLSVFGSRFMAVAEQMGRALQKTSVSTNVKERLDYSCALFDAKGNLVANAPHMPVHLGSMSTCVRTQAKIHEGKLKPGDVLVTNHPSYGGTHLPDITTITPHFEGDEIMFYVAARAHHADIGGILPGSMPSSSKELSEEGATIKSEKLVVDGVFQEERMIDLLYNEPAKVEGGSGSRCLRDNLNDLKAQVSANQKGINLITSLIKEYGKNSVLRYMKAIQENAESAVRQLLLGVRERFLGEDLYAEDHMDDGSKICLRITIDEENGDAIFDFTGTTEEIYGNINAPEAVTYSAIIYCLRVLISENIPLNQGCLLPIKVIIPDNCFLKPSETAAVVGGNVLTSQRITDTILKAFQACAASQGDTNNLTFGIGGKDPETGEVKPGFGYYETICGGSGAIDGLDGTSGVHTHMTNTRITDLEVLERRYPVILRKFIIRENSGGAGKYKGGDGVIRDIEFRIPVTLSILSERRAYHPYGMKGGKDAECGKNIWIRKDILPSGEQRVRQINVGGKNTCHMQAGDHIVIMTPGGGGYGPPSERVDTVKKANGVQHFRANGTISQLQEIQHTN</sequence>
<evidence type="ECO:0000305" key="1"/>
<feature type="chain" id="PRO_0000208584" description="Uncharacterized protein C11D3.15">
    <location>
        <begin position="1"/>
        <end position="1317"/>
    </location>
</feature>
<keyword id="KW-1185">Reference proteome</keyword>
<proteinExistence type="inferred from homology"/>
<reference key="1">
    <citation type="journal article" date="2002" name="Nature">
        <title>The genome sequence of Schizosaccharomyces pombe.</title>
        <authorList>
            <person name="Wood V."/>
            <person name="Gwilliam R."/>
            <person name="Rajandream M.A."/>
            <person name="Lyne M.H."/>
            <person name="Lyne R."/>
            <person name="Stewart A."/>
            <person name="Sgouros J.G."/>
            <person name="Peat N."/>
            <person name="Hayles J."/>
            <person name="Baker S.G."/>
            <person name="Basham D."/>
            <person name="Bowman S."/>
            <person name="Brooks K."/>
            <person name="Brown D."/>
            <person name="Brown S."/>
            <person name="Chillingworth T."/>
            <person name="Churcher C.M."/>
            <person name="Collins M."/>
            <person name="Connor R."/>
            <person name="Cronin A."/>
            <person name="Davis P."/>
            <person name="Feltwell T."/>
            <person name="Fraser A."/>
            <person name="Gentles S."/>
            <person name="Goble A."/>
            <person name="Hamlin N."/>
            <person name="Harris D.E."/>
            <person name="Hidalgo J."/>
            <person name="Hodgson G."/>
            <person name="Holroyd S."/>
            <person name="Hornsby T."/>
            <person name="Howarth S."/>
            <person name="Huckle E.J."/>
            <person name="Hunt S."/>
            <person name="Jagels K."/>
            <person name="James K.D."/>
            <person name="Jones L."/>
            <person name="Jones M."/>
            <person name="Leather S."/>
            <person name="McDonald S."/>
            <person name="McLean J."/>
            <person name="Mooney P."/>
            <person name="Moule S."/>
            <person name="Mungall K.L."/>
            <person name="Murphy L.D."/>
            <person name="Niblett D."/>
            <person name="Odell C."/>
            <person name="Oliver K."/>
            <person name="O'Neil S."/>
            <person name="Pearson D."/>
            <person name="Quail M.A."/>
            <person name="Rabbinowitsch E."/>
            <person name="Rutherford K.M."/>
            <person name="Rutter S."/>
            <person name="Saunders D."/>
            <person name="Seeger K."/>
            <person name="Sharp S."/>
            <person name="Skelton J."/>
            <person name="Simmonds M.N."/>
            <person name="Squares R."/>
            <person name="Squares S."/>
            <person name="Stevens K."/>
            <person name="Taylor K."/>
            <person name="Taylor R.G."/>
            <person name="Tivey A."/>
            <person name="Walsh S.V."/>
            <person name="Warren T."/>
            <person name="Whitehead S."/>
            <person name="Woodward J.R."/>
            <person name="Volckaert G."/>
            <person name="Aert R."/>
            <person name="Robben J."/>
            <person name="Grymonprez B."/>
            <person name="Weltjens I."/>
            <person name="Vanstreels E."/>
            <person name="Rieger M."/>
            <person name="Schaefer M."/>
            <person name="Mueller-Auer S."/>
            <person name="Gabel C."/>
            <person name="Fuchs M."/>
            <person name="Duesterhoeft A."/>
            <person name="Fritzc C."/>
            <person name="Holzer E."/>
            <person name="Moestl D."/>
            <person name="Hilbert H."/>
            <person name="Borzym K."/>
            <person name="Langer I."/>
            <person name="Beck A."/>
            <person name="Lehrach H."/>
            <person name="Reinhardt R."/>
            <person name="Pohl T.M."/>
            <person name="Eger P."/>
            <person name="Zimmermann W."/>
            <person name="Wedler H."/>
            <person name="Wambutt R."/>
            <person name="Purnelle B."/>
            <person name="Goffeau A."/>
            <person name="Cadieu E."/>
            <person name="Dreano S."/>
            <person name="Gloux S."/>
            <person name="Lelaure V."/>
            <person name="Mottier S."/>
            <person name="Galibert F."/>
            <person name="Aves S.J."/>
            <person name="Xiang Z."/>
            <person name="Hunt C."/>
            <person name="Moore K."/>
            <person name="Hurst S.M."/>
            <person name="Lucas M."/>
            <person name="Rochet M."/>
            <person name="Gaillardin C."/>
            <person name="Tallada V.A."/>
            <person name="Garzon A."/>
            <person name="Thode G."/>
            <person name="Daga R.R."/>
            <person name="Cruzado L."/>
            <person name="Jimenez J."/>
            <person name="Sanchez M."/>
            <person name="del Rey F."/>
            <person name="Benito J."/>
            <person name="Dominguez A."/>
            <person name="Revuelta J.L."/>
            <person name="Moreno S."/>
            <person name="Armstrong J."/>
            <person name="Forsburg S.L."/>
            <person name="Cerutti L."/>
            <person name="Lowe T."/>
            <person name="McCombie W.R."/>
            <person name="Paulsen I."/>
            <person name="Potashkin J."/>
            <person name="Shpakovski G.V."/>
            <person name="Ussery D."/>
            <person name="Barrell B.G."/>
            <person name="Nurse P."/>
        </authorList>
    </citation>
    <scope>NUCLEOTIDE SEQUENCE [LARGE SCALE GENOMIC DNA]</scope>
    <source>
        <strain>972 / ATCC 24843</strain>
    </source>
</reference>
<name>YAOF_SCHPO</name>
<organism>
    <name type="scientific">Schizosaccharomyces pombe (strain 972 / ATCC 24843)</name>
    <name type="common">Fission yeast</name>
    <dbReference type="NCBI Taxonomy" id="284812"/>
    <lineage>
        <taxon>Eukaryota</taxon>
        <taxon>Fungi</taxon>
        <taxon>Dikarya</taxon>
        <taxon>Ascomycota</taxon>
        <taxon>Taphrinomycotina</taxon>
        <taxon>Schizosaccharomycetes</taxon>
        <taxon>Schizosaccharomycetales</taxon>
        <taxon>Schizosaccharomycetaceae</taxon>
        <taxon>Schizosaccharomyces</taxon>
    </lineage>
</organism>